<feature type="chain" id="PRO_1000008460" description="Holo-[acyl-carrier-protein] synthase">
    <location>
        <begin position="1"/>
        <end position="126"/>
    </location>
</feature>
<feature type="binding site" evidence="1">
    <location>
        <position position="9"/>
    </location>
    <ligand>
        <name>Mg(2+)</name>
        <dbReference type="ChEBI" id="CHEBI:18420"/>
    </ligand>
</feature>
<feature type="binding site" evidence="1">
    <location>
        <position position="59"/>
    </location>
    <ligand>
        <name>Mg(2+)</name>
        <dbReference type="ChEBI" id="CHEBI:18420"/>
    </ligand>
</feature>
<evidence type="ECO:0000255" key="1">
    <source>
        <dbReference type="HAMAP-Rule" id="MF_00101"/>
    </source>
</evidence>
<proteinExistence type="inferred from homology"/>
<keyword id="KW-0963">Cytoplasm</keyword>
<keyword id="KW-0275">Fatty acid biosynthesis</keyword>
<keyword id="KW-0276">Fatty acid metabolism</keyword>
<keyword id="KW-0444">Lipid biosynthesis</keyword>
<keyword id="KW-0443">Lipid metabolism</keyword>
<keyword id="KW-0460">Magnesium</keyword>
<keyword id="KW-0479">Metal-binding</keyword>
<keyword id="KW-1185">Reference proteome</keyword>
<keyword id="KW-0808">Transferase</keyword>
<dbReference type="EC" id="2.7.8.7" evidence="1"/>
<dbReference type="EMBL" id="CP000113">
    <property type="protein sequence ID" value="ABF88402.1"/>
    <property type="molecule type" value="Genomic_DNA"/>
</dbReference>
<dbReference type="RefSeq" id="WP_011554351.1">
    <property type="nucleotide sequence ID" value="NC_008095.1"/>
</dbReference>
<dbReference type="SMR" id="Q1D4A0"/>
<dbReference type="STRING" id="246197.MXAN_4350"/>
<dbReference type="EnsemblBacteria" id="ABF88402">
    <property type="protein sequence ID" value="ABF88402"/>
    <property type="gene ID" value="MXAN_4350"/>
</dbReference>
<dbReference type="GeneID" id="41361662"/>
<dbReference type="KEGG" id="mxa:MXAN_4350"/>
<dbReference type="eggNOG" id="COG0736">
    <property type="taxonomic scope" value="Bacteria"/>
</dbReference>
<dbReference type="HOGENOM" id="CLU_089696_0_0_7"/>
<dbReference type="OrthoDB" id="517356at2"/>
<dbReference type="Proteomes" id="UP000002402">
    <property type="component" value="Chromosome"/>
</dbReference>
<dbReference type="GO" id="GO:0005737">
    <property type="term" value="C:cytoplasm"/>
    <property type="evidence" value="ECO:0007669"/>
    <property type="project" value="UniProtKB-SubCell"/>
</dbReference>
<dbReference type="GO" id="GO:0008897">
    <property type="term" value="F:holo-[acyl-carrier-protein] synthase activity"/>
    <property type="evidence" value="ECO:0007669"/>
    <property type="project" value="UniProtKB-UniRule"/>
</dbReference>
<dbReference type="GO" id="GO:0000287">
    <property type="term" value="F:magnesium ion binding"/>
    <property type="evidence" value="ECO:0007669"/>
    <property type="project" value="UniProtKB-UniRule"/>
</dbReference>
<dbReference type="GO" id="GO:0006633">
    <property type="term" value="P:fatty acid biosynthetic process"/>
    <property type="evidence" value="ECO:0007669"/>
    <property type="project" value="UniProtKB-UniRule"/>
</dbReference>
<dbReference type="Gene3D" id="3.90.470.20">
    <property type="entry name" value="4'-phosphopantetheinyl transferase domain"/>
    <property type="match status" value="1"/>
</dbReference>
<dbReference type="HAMAP" id="MF_00101">
    <property type="entry name" value="AcpS"/>
    <property type="match status" value="1"/>
</dbReference>
<dbReference type="InterPro" id="IPR008278">
    <property type="entry name" value="4-PPantetheinyl_Trfase_dom"/>
</dbReference>
<dbReference type="InterPro" id="IPR037143">
    <property type="entry name" value="4-PPantetheinyl_Trfase_dom_sf"/>
</dbReference>
<dbReference type="InterPro" id="IPR002582">
    <property type="entry name" value="ACPS"/>
</dbReference>
<dbReference type="InterPro" id="IPR004568">
    <property type="entry name" value="Ppantetheine-prot_Trfase_dom"/>
</dbReference>
<dbReference type="NCBIfam" id="TIGR00516">
    <property type="entry name" value="acpS"/>
    <property type="match status" value="1"/>
</dbReference>
<dbReference type="NCBIfam" id="TIGR00556">
    <property type="entry name" value="pantethn_trn"/>
    <property type="match status" value="1"/>
</dbReference>
<dbReference type="Pfam" id="PF01648">
    <property type="entry name" value="ACPS"/>
    <property type="match status" value="1"/>
</dbReference>
<dbReference type="SUPFAM" id="SSF56214">
    <property type="entry name" value="4'-phosphopantetheinyl transferase"/>
    <property type="match status" value="1"/>
</dbReference>
<gene>
    <name evidence="1" type="primary">acpS</name>
    <name type="ordered locus">MXAN_4350</name>
</gene>
<name>ACPS_MYXXD</name>
<sequence>MGIRGLGLDICSISRIQRILDGPRAEPFLNRVYTEAERALCGRRSDAASAYAARFAAKEALVKALGAPPGIRWKDMEVRRQGGAPYFALSGVALEVMEARGLEAFLALTHDADVAAATVVLQSKGD</sequence>
<accession>Q1D4A0</accession>
<protein>
    <recommendedName>
        <fullName evidence="1">Holo-[acyl-carrier-protein] synthase</fullName>
        <shortName evidence="1">Holo-ACP synthase</shortName>
        <ecNumber evidence="1">2.7.8.7</ecNumber>
    </recommendedName>
    <alternativeName>
        <fullName evidence="1">4'-phosphopantetheinyl transferase AcpS</fullName>
    </alternativeName>
</protein>
<organism>
    <name type="scientific">Myxococcus xanthus (strain DK1622)</name>
    <dbReference type="NCBI Taxonomy" id="246197"/>
    <lineage>
        <taxon>Bacteria</taxon>
        <taxon>Pseudomonadati</taxon>
        <taxon>Myxococcota</taxon>
        <taxon>Myxococcia</taxon>
        <taxon>Myxococcales</taxon>
        <taxon>Cystobacterineae</taxon>
        <taxon>Myxococcaceae</taxon>
        <taxon>Myxococcus</taxon>
    </lineage>
</organism>
<comment type="function">
    <text evidence="1">Transfers the 4'-phosphopantetheine moiety from coenzyme A to a Ser of acyl-carrier-protein.</text>
</comment>
<comment type="catalytic activity">
    <reaction evidence="1">
        <text>apo-[ACP] + CoA = holo-[ACP] + adenosine 3',5'-bisphosphate + H(+)</text>
        <dbReference type="Rhea" id="RHEA:12068"/>
        <dbReference type="Rhea" id="RHEA-COMP:9685"/>
        <dbReference type="Rhea" id="RHEA-COMP:9690"/>
        <dbReference type="ChEBI" id="CHEBI:15378"/>
        <dbReference type="ChEBI" id="CHEBI:29999"/>
        <dbReference type="ChEBI" id="CHEBI:57287"/>
        <dbReference type="ChEBI" id="CHEBI:58343"/>
        <dbReference type="ChEBI" id="CHEBI:64479"/>
        <dbReference type="EC" id="2.7.8.7"/>
    </reaction>
</comment>
<comment type="cofactor">
    <cofactor evidence="1">
        <name>Mg(2+)</name>
        <dbReference type="ChEBI" id="CHEBI:18420"/>
    </cofactor>
</comment>
<comment type="subcellular location">
    <subcellularLocation>
        <location evidence="1">Cytoplasm</location>
    </subcellularLocation>
</comment>
<comment type="similarity">
    <text evidence="1">Belongs to the P-Pant transferase superfamily. AcpS family.</text>
</comment>
<reference key="1">
    <citation type="journal article" date="2006" name="Proc. Natl. Acad. Sci. U.S.A.">
        <title>Evolution of sensory complexity recorded in a myxobacterial genome.</title>
        <authorList>
            <person name="Goldman B.S."/>
            <person name="Nierman W.C."/>
            <person name="Kaiser D."/>
            <person name="Slater S.C."/>
            <person name="Durkin A.S."/>
            <person name="Eisen J.A."/>
            <person name="Ronning C.M."/>
            <person name="Barbazuk W.B."/>
            <person name="Blanchard M."/>
            <person name="Field C."/>
            <person name="Halling C."/>
            <person name="Hinkle G."/>
            <person name="Iartchuk O."/>
            <person name="Kim H.S."/>
            <person name="Mackenzie C."/>
            <person name="Madupu R."/>
            <person name="Miller N."/>
            <person name="Shvartsbeyn A."/>
            <person name="Sullivan S.A."/>
            <person name="Vaudin M."/>
            <person name="Wiegand R."/>
            <person name="Kaplan H.B."/>
        </authorList>
    </citation>
    <scope>NUCLEOTIDE SEQUENCE [LARGE SCALE GENOMIC DNA]</scope>
    <source>
        <strain>DK1622</strain>
    </source>
</reference>